<evidence type="ECO:0000250" key="1"/>
<evidence type="ECO:0000250" key="2">
    <source>
        <dbReference type="UniProtKB" id="Q96G74"/>
    </source>
</evidence>
<evidence type="ECO:0000255" key="3"/>
<evidence type="ECO:0000255" key="4">
    <source>
        <dbReference type="PROSITE-ProRule" id="PRU00139"/>
    </source>
</evidence>
<evidence type="ECO:0000256" key="5">
    <source>
        <dbReference type="SAM" id="MobiDB-lite"/>
    </source>
</evidence>
<evidence type="ECO:0000305" key="6"/>
<protein>
    <recommendedName>
        <fullName>OTU domain-containing protein 5-A</fullName>
        <ecNumber evidence="2">3.4.19.12</ecNumber>
    </recommendedName>
    <alternativeName>
        <fullName>Deubiquitinating enzyme A</fullName>
        <shortName>DUBA</shortName>
    </alternativeName>
</protein>
<keyword id="KW-0378">Hydrolase</keyword>
<keyword id="KW-0645">Protease</keyword>
<keyword id="KW-1185">Reference proteome</keyword>
<keyword id="KW-0788">Thiol protease</keyword>
<keyword id="KW-0833">Ubl conjugation pathway</keyword>
<comment type="function">
    <text evidence="2">Deubiquitinating enzyme that may function as negative regulator of the innate immune system. Has peptidase activity towards 'Lys-48'- and 'Lys-63'-linked polyubiquitin chains. Can also cleave 'Lys-11'-linked ubiquitin chains (in vitro) (By similarity).</text>
</comment>
<comment type="catalytic activity">
    <reaction>
        <text>Thiol-dependent hydrolysis of ester, thioester, amide, peptide and isopeptide bonds formed by the C-terminal Gly of ubiquitin (a 76-residue protein attached to proteins as an intracellular targeting signal).</text>
        <dbReference type="EC" id="3.4.19.12"/>
    </reaction>
</comment>
<comment type="similarity">
    <text evidence="6">Belongs to the peptidase C85 family.</text>
</comment>
<organism>
    <name type="scientific">Xenopus laevis</name>
    <name type="common">African clawed frog</name>
    <dbReference type="NCBI Taxonomy" id="8355"/>
    <lineage>
        <taxon>Eukaryota</taxon>
        <taxon>Metazoa</taxon>
        <taxon>Chordata</taxon>
        <taxon>Craniata</taxon>
        <taxon>Vertebrata</taxon>
        <taxon>Euteleostomi</taxon>
        <taxon>Amphibia</taxon>
        <taxon>Batrachia</taxon>
        <taxon>Anura</taxon>
        <taxon>Pipoidea</taxon>
        <taxon>Pipidae</taxon>
        <taxon>Xenopodinae</taxon>
        <taxon>Xenopus</taxon>
        <taxon>Xenopus</taxon>
    </lineage>
</organism>
<reference key="1">
    <citation type="submission" date="2003-01" db="EMBL/GenBank/DDBJ databases">
        <authorList>
            <consortium name="NIH - Xenopus Gene Collection (XGC) project"/>
        </authorList>
    </citation>
    <scope>NUCLEOTIDE SEQUENCE [LARGE SCALE MRNA]</scope>
    <source>
        <tissue>Embryo</tissue>
    </source>
</reference>
<accession>Q7ZX21</accession>
<feature type="chain" id="PRO_0000278227" description="OTU domain-containing protein 5-A">
    <location>
        <begin position="1"/>
        <end position="513"/>
    </location>
</feature>
<feature type="domain" description="OTU" evidence="4">
    <location>
        <begin position="166"/>
        <end position="289"/>
    </location>
</feature>
<feature type="region of interest" description="Disordered" evidence="5">
    <location>
        <begin position="1"/>
        <end position="75"/>
    </location>
</feature>
<feature type="region of interest" description="Disordered" evidence="5">
    <location>
        <begin position="99"/>
        <end position="136"/>
    </location>
</feature>
<feature type="region of interest" description="Cys-loop" evidence="1">
    <location>
        <begin position="171"/>
        <end position="177"/>
    </location>
</feature>
<feature type="region of interest" description="Variable-loop" evidence="1">
    <location>
        <begin position="226"/>
        <end position="236"/>
    </location>
</feature>
<feature type="region of interest" description="His-loop" evidence="1">
    <location>
        <begin position="277"/>
        <end position="282"/>
    </location>
</feature>
<feature type="region of interest" description="Disordered" evidence="5">
    <location>
        <begin position="387"/>
        <end position="446"/>
    </location>
</feature>
<feature type="active site" evidence="3">
    <location>
        <position position="174"/>
    </location>
</feature>
<feature type="active site" description="Nucleophile" evidence="2">
    <location>
        <position position="177"/>
    </location>
</feature>
<feature type="active site" evidence="2">
    <location>
        <position position="282"/>
    </location>
</feature>
<name>OTU5A_XENLA</name>
<sequence>MTILPKKKPPPPPDPEANGERSGSGAPDSHSRSGARPRSSPPPRWAYPGNPSSAAERHTQQVSPPPGSATSGGAGPLGDGALGSCCCCNGAGAGGCCSGPGHSKRRRQVLSAGPGATGNCPDTDDGAGNNSEDEYETAAQTQHLDPDTAEQQELCFEKTLSDKKGFIIKQMKEDGACLFRAVADQVYGDQDMHEVVRKHCMDYLMKNADYFSNYVTEDFTTYINRKRKNNCHGNHIEMQAMAEMYNRPVEVYQYGTEPINTFHGIQKNEDEPIRVSYHRNIHYNSVVNPNKATIGVGLGLPSFKPGYAEQSLMKSAIRTSEESWIEQQMLEDKKRATDWEATNEAIEEQVARESYLQWLRDQEKQARQPRKASATCSSATAAACSGLEEWSGRSPRQRSTAGSPEHPDLHAELCMKPPSPGAPLILGKPPSPCAPGPSNQMSTGADRATSPLVSLYPALECRAIMQHMSPTAFGLKDWDNDEILASVLAASQQEYLDTMKKSTLRRESSPDHS</sequence>
<dbReference type="EC" id="3.4.19.12" evidence="2"/>
<dbReference type="EMBL" id="BC046254">
    <property type="protein sequence ID" value="AAH46254.1"/>
    <property type="molecule type" value="mRNA"/>
</dbReference>
<dbReference type="RefSeq" id="NP_001080318.1">
    <property type="nucleotide sequence ID" value="NM_001086849.1"/>
</dbReference>
<dbReference type="SMR" id="Q7ZX21"/>
<dbReference type="MEROPS" id="C85.001"/>
<dbReference type="DNASU" id="380010"/>
<dbReference type="GeneID" id="380010"/>
<dbReference type="KEGG" id="xla:380010"/>
<dbReference type="AGR" id="Xenbase:XB-GENE-6254232"/>
<dbReference type="CTD" id="380010"/>
<dbReference type="Xenbase" id="XB-GENE-6254232">
    <property type="gene designation" value="otud5.S"/>
</dbReference>
<dbReference type="OrthoDB" id="409956at2759"/>
<dbReference type="Proteomes" id="UP000186698">
    <property type="component" value="Chromosome 8S"/>
</dbReference>
<dbReference type="Bgee" id="380010">
    <property type="expression patterns" value="Expressed in internal ear and 19 other cell types or tissues"/>
</dbReference>
<dbReference type="GO" id="GO:0004843">
    <property type="term" value="F:cysteine-type deubiquitinase activity"/>
    <property type="evidence" value="ECO:0000250"/>
    <property type="project" value="UniProtKB"/>
</dbReference>
<dbReference type="GO" id="GO:0061578">
    <property type="term" value="F:K63-linked deubiquitinase activity"/>
    <property type="evidence" value="ECO:0000318"/>
    <property type="project" value="GO_Central"/>
</dbReference>
<dbReference type="GO" id="GO:0090090">
    <property type="term" value="P:negative regulation of canonical Wnt signaling pathway"/>
    <property type="evidence" value="ECO:0000318"/>
    <property type="project" value="GO_Central"/>
</dbReference>
<dbReference type="GO" id="GO:1904263">
    <property type="term" value="P:positive regulation of TORC1 signaling"/>
    <property type="evidence" value="ECO:0000318"/>
    <property type="project" value="GO_Central"/>
</dbReference>
<dbReference type="GO" id="GO:1904515">
    <property type="term" value="P:positive regulation of TORC2 signaling"/>
    <property type="evidence" value="ECO:0000318"/>
    <property type="project" value="GO_Central"/>
</dbReference>
<dbReference type="GO" id="GO:0071108">
    <property type="term" value="P:protein K48-linked deubiquitination"/>
    <property type="evidence" value="ECO:0000250"/>
    <property type="project" value="UniProtKB"/>
</dbReference>
<dbReference type="GO" id="GO:0070536">
    <property type="term" value="P:protein K63-linked deubiquitination"/>
    <property type="evidence" value="ECO:0000250"/>
    <property type="project" value="UniProtKB"/>
</dbReference>
<dbReference type="GO" id="GO:0006508">
    <property type="term" value="P:proteolysis"/>
    <property type="evidence" value="ECO:0007669"/>
    <property type="project" value="UniProtKB-KW"/>
</dbReference>
<dbReference type="GO" id="GO:0050776">
    <property type="term" value="P:regulation of immune response"/>
    <property type="evidence" value="ECO:0000318"/>
    <property type="project" value="GO_Central"/>
</dbReference>
<dbReference type="GO" id="GO:0032496">
    <property type="term" value="P:response to lipopolysaccharide"/>
    <property type="evidence" value="ECO:0000250"/>
    <property type="project" value="UniProtKB"/>
</dbReference>
<dbReference type="CDD" id="cd22752">
    <property type="entry name" value="OTU_OTUD5-like"/>
    <property type="match status" value="1"/>
</dbReference>
<dbReference type="FunFam" id="3.90.70.80:FF:000002">
    <property type="entry name" value="OTU domain-containing protein 5 isoform X2"/>
    <property type="match status" value="1"/>
</dbReference>
<dbReference type="Gene3D" id="3.90.70.80">
    <property type="match status" value="1"/>
</dbReference>
<dbReference type="InterPro" id="IPR003323">
    <property type="entry name" value="OTU_dom"/>
</dbReference>
<dbReference type="InterPro" id="IPR038765">
    <property type="entry name" value="Papain-like_cys_pep_sf"/>
</dbReference>
<dbReference type="InterPro" id="IPR050704">
    <property type="entry name" value="Peptidase_C85-like"/>
</dbReference>
<dbReference type="PANTHER" id="PTHR12419">
    <property type="entry name" value="OTU DOMAIN CONTAINING PROTEIN"/>
    <property type="match status" value="1"/>
</dbReference>
<dbReference type="PANTHER" id="PTHR12419:SF4">
    <property type="entry name" value="OTU DOMAIN-CONTAINING PROTEIN 5"/>
    <property type="match status" value="1"/>
</dbReference>
<dbReference type="Pfam" id="PF02338">
    <property type="entry name" value="OTU"/>
    <property type="match status" value="1"/>
</dbReference>
<dbReference type="SUPFAM" id="SSF54001">
    <property type="entry name" value="Cysteine proteinases"/>
    <property type="match status" value="1"/>
</dbReference>
<dbReference type="PROSITE" id="PS50802">
    <property type="entry name" value="OTU"/>
    <property type="match status" value="1"/>
</dbReference>
<proteinExistence type="evidence at transcript level"/>
<gene>
    <name type="primary">otud5-a</name>
</gene>